<organism>
    <name type="scientific">Drosophila melanogaster</name>
    <name type="common">Fruit fly</name>
    <dbReference type="NCBI Taxonomy" id="7227"/>
    <lineage>
        <taxon>Eukaryota</taxon>
        <taxon>Metazoa</taxon>
        <taxon>Ecdysozoa</taxon>
        <taxon>Arthropoda</taxon>
        <taxon>Hexapoda</taxon>
        <taxon>Insecta</taxon>
        <taxon>Pterygota</taxon>
        <taxon>Neoptera</taxon>
        <taxon>Endopterygota</taxon>
        <taxon>Diptera</taxon>
        <taxon>Brachycera</taxon>
        <taxon>Muscomorpha</taxon>
        <taxon>Ephydroidea</taxon>
        <taxon>Drosophilidae</taxon>
        <taxon>Drosophila</taxon>
        <taxon>Sophophora</taxon>
    </lineage>
</organism>
<accession>P17970</accession>
<accession>O76805</accession>
<accession>Q9I7T9</accession>
<accession>Q9I7U0</accession>
<protein>
    <recommendedName>
        <fullName>Potassium voltage-gated channel protein Shab</fullName>
    </recommendedName>
</protein>
<sequence length="985" mass="106359">MVGQLQGGQAAGQQQQQQQATQQQQHSKQQQQQQQQQQQQLQLKQHQQQQQDILYQQHNEAIAIARGLQAATPADIGDNQPYYDTSGNVDWERAMGAGGAGAYGGIGIGSLPAAGGAAYHLGPANPAGLVSRHLDYGDGGHLAGPSAGLPAGAVGSGAGAGAGAGASVTGSGSGAGTGTGTGAGSGSGSGAAGKEVRYAPFPVASPTHSIPTTSQQIVGSVGGVGVGGASSQSISGGVPTHSQSNTTGALQRTHSRSMSSIPPPEPFMIAQSKAVNSRVSINVGGVRHEVLWRTLERLPHTRLGRLRECTTHEAIVELCDDYSLADNEYFFDRHPKSFSSILNFYRTGKLHIVDEMCVLAFSDDLEYWGVDELYLESCCQHKYHQRKENVHEEMRKEAESLRQRDEEEFGEGKFSEYQKYLWELLEKPNTSFAARVIAVISILFIVLSTIALTLNTLPQLQHIDNGTPQDNPQLAMVEAVCITWFTLEYILRFSASPDKWKFFKGGLNIIDLLAILPYFVSLFLLETNKNATDQFQDVRRVVQVFRIMRILRVLKLARHSTGLQSLGFTLRNSYKELGLLMLFLAMGVLIFSSLAYFAEKDEKDTKFVSIPEAFWWAGITMTTVGYGDICPTTALGKVIGTVCCICGVLVVALPIPIIVNNFAEFYKNQMRREKALKRREALDRAKREGSIVSFHHINLKDAFAKSMDLIDVIVDTGKQTNVVHPKGKRQSTPNIGRQTLDVQSAPGHNLSQTDGNSTEGESTSGRNPATTGTGCYKNYDHVANLRNSNLHNRRGSSSEQDAVPPYSFDNPNARQTSMMAMESYRREQQALLQQQQQQQQQMLQMQQIQQKAPNGNGGATGGGVANNLAMVAASSAATAVATATNASNASNTAPGSEGAEGGGDGDGGGVDDDNLSQAKGLPIQMMITPGEVAELRRQVALENLQNQRMDNLEQDVPVEFECCFCTTKGLPGCHGECIPLRANSV</sequence>
<evidence type="ECO:0000250" key="1"/>
<evidence type="ECO:0000255" key="2"/>
<evidence type="ECO:0000256" key="3">
    <source>
        <dbReference type="SAM" id="MobiDB-lite"/>
    </source>
</evidence>
<evidence type="ECO:0000269" key="4">
    <source>
    </source>
</evidence>
<evidence type="ECO:0000303" key="5">
    <source>
    </source>
</evidence>
<evidence type="ECO:0000305" key="6"/>
<comment type="function">
    <text>Mediates the voltage-dependent potassium ion permeability of excitable membranes. Assuming opened or closed conformations in response to the voltage difference across the membrane, the protein forms a potassium-selective channel through which potassium ions may pass in accordance with their electrochemical gradient.</text>
</comment>
<comment type="subunit">
    <text evidence="1">Heterotetramer of potassium channel proteins.</text>
</comment>
<comment type="subcellular location">
    <subcellularLocation>
        <location>Membrane</location>
        <topology>Multi-pass membrane protein</topology>
    </subcellularLocation>
</comment>
<comment type="alternative products">
    <event type="alternative splicing"/>
    <isoform>
        <id>P17970-1</id>
        <name>B</name>
        <sequence type="displayed"/>
    </isoform>
    <isoform>
        <id>P17970-2</id>
        <name>A</name>
        <sequence type="described" ref="VSP_000960"/>
    </isoform>
</comment>
<comment type="developmental stage">
    <text>Expressed in late embryos and pupae.</text>
</comment>
<comment type="domain">
    <text>The N-terminus may be important in determining the rate of inactivation of the channel while the tail may play a role in modulation of channel activity and/or targeting of the channel to specific subcellular compartments.</text>
</comment>
<comment type="miscellaneous">
    <text>The segment S4 is probably the voltage-sensor and is characterized by a series of positively charged amino acids at every third position.</text>
</comment>
<comment type="similarity">
    <text evidence="6">Belongs to the potassium channel family. B (Shab) (TC 1.A.1.2) subfamily. Shab sub-subfamily.</text>
</comment>
<comment type="sequence caution" evidence="6">
    <conflict type="erroneous initiation">
        <sequence resource="EMBL-CDS" id="AAG22232"/>
    </conflict>
    <text>Extended N-terminus.</text>
</comment>
<comment type="sequence caution" evidence="6">
    <conflict type="erroneous initiation">
        <sequence resource="EMBL-CDS" id="AAG22233"/>
    </conflict>
    <text>Extended N-terminus.</text>
</comment>
<reference key="1">
    <citation type="journal article" date="1989" name="Science">
        <title>A family of putative potassium channel genes in Drosophila.</title>
        <authorList>
            <person name="Butler A."/>
            <person name="Wei A.G."/>
            <person name="Baker K."/>
            <person name="Salkoff L."/>
        </authorList>
    </citation>
    <scope>NUCLEOTIDE SEQUENCE (ISOFORMS A AND B)</scope>
    <source>
        <strain>Oregon-R</strain>
    </source>
</reference>
<reference key="2">
    <citation type="journal article" date="1990" name="Science">
        <title>K+ current diversity is produced by an extended gene family conserved in Drosophila and mouse.</title>
        <authorList>
            <person name="Wei A.G."/>
            <person name="Covarrubias M."/>
            <person name="Butler A."/>
            <person name="Baker K."/>
            <person name="Pak M."/>
            <person name="Salkoff L."/>
        </authorList>
    </citation>
    <scope>NUCLEOTIDE SEQUENCE [MRNA] (ISOFORM B)</scope>
</reference>
<reference key="3">
    <citation type="journal article" date="1990" name="Nucleic Acids Res.">
        <title>Shal, Shab, and Shaw: three genes encoding potassium channels in Drosophila.</title>
        <authorList>
            <person name="Butler A."/>
            <person name="Wei A."/>
            <person name="Baker K."/>
            <person name="Salkoff L."/>
        </authorList>
    </citation>
    <scope>NUCLEOTIDE SEQUENCE [MRNA] (ISOFORM B)</scope>
</reference>
<reference key="4">
    <citation type="journal article" date="1999" name="J. Biol. Chem.">
        <title>Mutational analysis of the Shab-encoded delayed rectifier K(+) channels in Drosophila.</title>
        <authorList>
            <person name="Hegde P."/>
            <person name="Gu G.G."/>
            <person name="Chen D."/>
            <person name="Free S.J."/>
            <person name="Singh S."/>
        </authorList>
    </citation>
    <scope>NUCLEOTIDE SEQUENCE [MRNA] (ISOFORM A)</scope>
    <scope>MUTAGENESIS</scope>
    <source>
        <strain>Canton-S</strain>
    </source>
</reference>
<reference key="5">
    <citation type="journal article" date="2000" name="Science">
        <title>The genome sequence of Drosophila melanogaster.</title>
        <authorList>
            <person name="Adams M.D."/>
            <person name="Celniker S.E."/>
            <person name="Holt R.A."/>
            <person name="Evans C.A."/>
            <person name="Gocayne J.D."/>
            <person name="Amanatides P.G."/>
            <person name="Scherer S.E."/>
            <person name="Li P.W."/>
            <person name="Hoskins R.A."/>
            <person name="Galle R.F."/>
            <person name="George R.A."/>
            <person name="Lewis S.E."/>
            <person name="Richards S."/>
            <person name="Ashburner M."/>
            <person name="Henderson S.N."/>
            <person name="Sutton G.G."/>
            <person name="Wortman J.R."/>
            <person name="Yandell M.D."/>
            <person name="Zhang Q."/>
            <person name="Chen L.X."/>
            <person name="Brandon R.C."/>
            <person name="Rogers Y.-H.C."/>
            <person name="Blazej R.G."/>
            <person name="Champe M."/>
            <person name="Pfeiffer B.D."/>
            <person name="Wan K.H."/>
            <person name="Doyle C."/>
            <person name="Baxter E.G."/>
            <person name="Helt G."/>
            <person name="Nelson C.R."/>
            <person name="Miklos G.L.G."/>
            <person name="Abril J.F."/>
            <person name="Agbayani A."/>
            <person name="An H.-J."/>
            <person name="Andrews-Pfannkoch C."/>
            <person name="Baldwin D."/>
            <person name="Ballew R.M."/>
            <person name="Basu A."/>
            <person name="Baxendale J."/>
            <person name="Bayraktaroglu L."/>
            <person name="Beasley E.M."/>
            <person name="Beeson K.Y."/>
            <person name="Benos P.V."/>
            <person name="Berman B.P."/>
            <person name="Bhandari D."/>
            <person name="Bolshakov S."/>
            <person name="Borkova D."/>
            <person name="Botchan M.R."/>
            <person name="Bouck J."/>
            <person name="Brokstein P."/>
            <person name="Brottier P."/>
            <person name="Burtis K.C."/>
            <person name="Busam D.A."/>
            <person name="Butler H."/>
            <person name="Cadieu E."/>
            <person name="Center A."/>
            <person name="Chandra I."/>
            <person name="Cherry J.M."/>
            <person name="Cawley S."/>
            <person name="Dahlke C."/>
            <person name="Davenport L.B."/>
            <person name="Davies P."/>
            <person name="de Pablos B."/>
            <person name="Delcher A."/>
            <person name="Deng Z."/>
            <person name="Mays A.D."/>
            <person name="Dew I."/>
            <person name="Dietz S.M."/>
            <person name="Dodson K."/>
            <person name="Doup L.E."/>
            <person name="Downes M."/>
            <person name="Dugan-Rocha S."/>
            <person name="Dunkov B.C."/>
            <person name="Dunn P."/>
            <person name="Durbin K.J."/>
            <person name="Evangelista C.C."/>
            <person name="Ferraz C."/>
            <person name="Ferriera S."/>
            <person name="Fleischmann W."/>
            <person name="Fosler C."/>
            <person name="Gabrielian A.E."/>
            <person name="Garg N.S."/>
            <person name="Gelbart W.M."/>
            <person name="Glasser K."/>
            <person name="Glodek A."/>
            <person name="Gong F."/>
            <person name="Gorrell J.H."/>
            <person name="Gu Z."/>
            <person name="Guan P."/>
            <person name="Harris M."/>
            <person name="Harris N.L."/>
            <person name="Harvey D.A."/>
            <person name="Heiman T.J."/>
            <person name="Hernandez J.R."/>
            <person name="Houck J."/>
            <person name="Hostin D."/>
            <person name="Houston K.A."/>
            <person name="Howland T.J."/>
            <person name="Wei M.-H."/>
            <person name="Ibegwam C."/>
            <person name="Jalali M."/>
            <person name="Kalush F."/>
            <person name="Karpen G.H."/>
            <person name="Ke Z."/>
            <person name="Kennison J.A."/>
            <person name="Ketchum K.A."/>
            <person name="Kimmel B.E."/>
            <person name="Kodira C.D."/>
            <person name="Kraft C.L."/>
            <person name="Kravitz S."/>
            <person name="Kulp D."/>
            <person name="Lai Z."/>
            <person name="Lasko P."/>
            <person name="Lei Y."/>
            <person name="Levitsky A.A."/>
            <person name="Li J.H."/>
            <person name="Li Z."/>
            <person name="Liang Y."/>
            <person name="Lin X."/>
            <person name="Liu X."/>
            <person name="Mattei B."/>
            <person name="McIntosh T.C."/>
            <person name="McLeod M.P."/>
            <person name="McPherson D."/>
            <person name="Merkulov G."/>
            <person name="Milshina N.V."/>
            <person name="Mobarry C."/>
            <person name="Morris J."/>
            <person name="Moshrefi A."/>
            <person name="Mount S.M."/>
            <person name="Moy M."/>
            <person name="Murphy B."/>
            <person name="Murphy L."/>
            <person name="Muzny D.M."/>
            <person name="Nelson D.L."/>
            <person name="Nelson D.R."/>
            <person name="Nelson K.A."/>
            <person name="Nixon K."/>
            <person name="Nusskern D.R."/>
            <person name="Pacleb J.M."/>
            <person name="Palazzolo M."/>
            <person name="Pittman G.S."/>
            <person name="Pan S."/>
            <person name="Pollard J."/>
            <person name="Puri V."/>
            <person name="Reese M.G."/>
            <person name="Reinert K."/>
            <person name="Remington K."/>
            <person name="Saunders R.D.C."/>
            <person name="Scheeler F."/>
            <person name="Shen H."/>
            <person name="Shue B.C."/>
            <person name="Siden-Kiamos I."/>
            <person name="Simpson M."/>
            <person name="Skupski M.P."/>
            <person name="Smith T.J."/>
            <person name="Spier E."/>
            <person name="Spradling A.C."/>
            <person name="Stapleton M."/>
            <person name="Strong R."/>
            <person name="Sun E."/>
            <person name="Svirskas R."/>
            <person name="Tector C."/>
            <person name="Turner R."/>
            <person name="Venter E."/>
            <person name="Wang A.H."/>
            <person name="Wang X."/>
            <person name="Wang Z.-Y."/>
            <person name="Wassarman D.A."/>
            <person name="Weinstock G.M."/>
            <person name="Weissenbach J."/>
            <person name="Williams S.M."/>
            <person name="Woodage T."/>
            <person name="Worley K.C."/>
            <person name="Wu D."/>
            <person name="Yang S."/>
            <person name="Yao Q.A."/>
            <person name="Ye J."/>
            <person name="Yeh R.-F."/>
            <person name="Zaveri J.S."/>
            <person name="Zhan M."/>
            <person name="Zhang G."/>
            <person name="Zhao Q."/>
            <person name="Zheng L."/>
            <person name="Zheng X.H."/>
            <person name="Zhong F.N."/>
            <person name="Zhong W."/>
            <person name="Zhou X."/>
            <person name="Zhu S.C."/>
            <person name="Zhu X."/>
            <person name="Smith H.O."/>
            <person name="Gibbs R.A."/>
            <person name="Myers E.W."/>
            <person name="Rubin G.M."/>
            <person name="Venter J.C."/>
        </authorList>
    </citation>
    <scope>NUCLEOTIDE SEQUENCE [LARGE SCALE GENOMIC DNA]</scope>
    <source>
        <strain>Berkeley</strain>
    </source>
</reference>
<reference key="6">
    <citation type="journal article" date="2002" name="Genome Biol.">
        <title>Annotation of the Drosophila melanogaster euchromatic genome: a systematic review.</title>
        <authorList>
            <person name="Misra S."/>
            <person name="Crosby M.A."/>
            <person name="Mungall C.J."/>
            <person name="Matthews B.B."/>
            <person name="Campbell K.S."/>
            <person name="Hradecky P."/>
            <person name="Huang Y."/>
            <person name="Kaminker J.S."/>
            <person name="Millburn G.H."/>
            <person name="Prochnik S.E."/>
            <person name="Smith C.D."/>
            <person name="Tupy J.L."/>
            <person name="Whitfield E.J."/>
            <person name="Bayraktaroglu L."/>
            <person name="Berman B.P."/>
            <person name="Bettencourt B.R."/>
            <person name="Celniker S.E."/>
            <person name="de Grey A.D.N.J."/>
            <person name="Drysdale R.A."/>
            <person name="Harris N.L."/>
            <person name="Richter J."/>
            <person name="Russo S."/>
            <person name="Schroeder A.J."/>
            <person name="Shu S.Q."/>
            <person name="Stapleton M."/>
            <person name="Yamada C."/>
            <person name="Ashburner M."/>
            <person name="Gelbart W.M."/>
            <person name="Rubin G.M."/>
            <person name="Lewis S.E."/>
        </authorList>
    </citation>
    <scope>GENOME REANNOTATION</scope>
    <scope>ALTERNATIVE SPLICING</scope>
    <source>
        <strain>Berkeley</strain>
    </source>
</reference>
<feature type="chain" id="PRO_0000053965" description="Potassium voltage-gated channel protein Shab">
    <location>
        <begin position="1"/>
        <end position="985"/>
    </location>
</feature>
<feature type="transmembrane region" description="Helical; Name=Segment S1">
    <location>
        <begin position="436"/>
        <end position="454"/>
    </location>
</feature>
<feature type="transmembrane region" description="Helical; Name=Segment S2">
    <location>
        <begin position="474"/>
        <end position="495"/>
    </location>
</feature>
<feature type="transmembrane region" description="Helical; Name=Segment S3">
    <location>
        <begin position="506"/>
        <end position="527"/>
    </location>
</feature>
<feature type="transmembrane region" description="Helical; Name=Segment S4">
    <location>
        <begin position="536"/>
        <end position="561"/>
    </location>
</feature>
<feature type="transmembrane region" description="Helical; Name=Segment S5">
    <location>
        <begin position="577"/>
        <end position="598"/>
    </location>
</feature>
<feature type="transmembrane region" description="Helical; Name=Segment S6">
    <location>
        <begin position="638"/>
        <end position="659"/>
    </location>
</feature>
<feature type="region of interest" description="Disordered" evidence="3">
    <location>
        <begin position="1"/>
        <end position="42"/>
    </location>
</feature>
<feature type="region of interest" description="Disordered" evidence="3">
    <location>
        <begin position="160"/>
        <end position="192"/>
    </location>
</feature>
<feature type="region of interest" description="Disordered" evidence="3">
    <location>
        <begin position="230"/>
        <end position="260"/>
    </location>
</feature>
<feature type="region of interest" description="Disordered" evidence="3">
    <location>
        <begin position="721"/>
        <end position="775"/>
    </location>
</feature>
<feature type="region of interest" description="Disordered" evidence="3">
    <location>
        <begin position="789"/>
        <end position="813"/>
    </location>
</feature>
<feature type="region of interest" description="Disordered" evidence="3">
    <location>
        <begin position="886"/>
        <end position="916"/>
    </location>
</feature>
<feature type="short sequence motif" description="Selectivity filter" evidence="1">
    <location>
        <begin position="623"/>
        <end position="628"/>
    </location>
</feature>
<feature type="compositionally biased region" description="Gly residues" evidence="3">
    <location>
        <begin position="1"/>
        <end position="10"/>
    </location>
</feature>
<feature type="compositionally biased region" description="Low complexity" evidence="3">
    <location>
        <begin position="11"/>
        <end position="42"/>
    </location>
</feature>
<feature type="compositionally biased region" description="Gly residues" evidence="3">
    <location>
        <begin position="171"/>
        <end position="191"/>
    </location>
</feature>
<feature type="compositionally biased region" description="Polar residues" evidence="3">
    <location>
        <begin position="240"/>
        <end position="260"/>
    </location>
</feature>
<feature type="compositionally biased region" description="Polar residues" evidence="3">
    <location>
        <begin position="730"/>
        <end position="742"/>
    </location>
</feature>
<feature type="compositionally biased region" description="Polar residues" evidence="3">
    <location>
        <begin position="749"/>
        <end position="773"/>
    </location>
</feature>
<feature type="compositionally biased region" description="Polar residues" evidence="3">
    <location>
        <begin position="789"/>
        <end position="800"/>
    </location>
</feature>
<feature type="compositionally biased region" description="Gly residues" evidence="3">
    <location>
        <begin position="898"/>
        <end position="908"/>
    </location>
</feature>
<feature type="modified residue" description="Phosphoserine; by PKA" evidence="2">
    <location>
        <position position="690"/>
    </location>
</feature>
<feature type="modified residue" description="Phosphoserine; by PKA" evidence="2">
    <location>
        <position position="731"/>
    </location>
</feature>
<feature type="modified residue" description="Phosphoserine; by PKA" evidence="2">
    <location>
        <position position="796"/>
    </location>
</feature>
<feature type="glycosylation site" description="N-linked (GlcNAc...) asparagine" evidence="2">
    <location>
        <position position="245"/>
    </location>
</feature>
<feature type="glycosylation site" description="N-linked (GlcNAc...) asparagine" evidence="2">
    <location>
        <position position="429"/>
    </location>
</feature>
<feature type="glycosylation site" description="N-linked (GlcNAc...) asparagine" evidence="2">
    <location>
        <position position="530"/>
    </location>
</feature>
<feature type="glycosylation site" description="N-linked (GlcNAc...) asparagine" evidence="2">
    <location>
        <position position="749"/>
    </location>
</feature>
<feature type="glycosylation site" description="N-linked (GlcNAc...) asparagine" evidence="2">
    <location>
        <position position="756"/>
    </location>
</feature>
<feature type="glycosylation site" description="N-linked (GlcNAc...) asparagine" evidence="2">
    <location>
        <position position="885"/>
    </location>
</feature>
<feature type="glycosylation site" description="N-linked (GlcNAc...) asparagine" evidence="2">
    <location>
        <position position="888"/>
    </location>
</feature>
<feature type="glycosylation site" description="N-linked (GlcNAc...) asparagine" evidence="2">
    <location>
        <position position="914"/>
    </location>
</feature>
<feature type="splice variant" id="VSP_000960" description="In isoform A." evidence="5">
    <location>
        <begin position="717"/>
        <end position="746"/>
    </location>
</feature>
<feature type="mutagenesis site" description="In allele Shab-1; temperature-sensitive paralytic." evidence="4">
    <original>R</original>
    <variation>Q</variation>
    <location>
        <position position="435"/>
    </location>
</feature>
<feature type="mutagenesis site" description="In allele Shab-1; temperature-sensitive paralytic." evidence="4">
    <original>V</original>
    <variation>D</variation>
    <location>
        <position position="608"/>
    </location>
</feature>
<feature type="sequence conflict" description="In Ref. 1, 2 and 3." evidence="6" ref="1 2 3">
    <original>Q</original>
    <variation>L</variation>
    <location>
        <position position="31"/>
    </location>
</feature>
<feature type="sequence conflict" description="In Ref. 1, 2 and 3." evidence="6" ref="1 2 3">
    <original>S</original>
    <variation>G</variation>
    <location>
        <position position="220"/>
    </location>
</feature>
<feature type="sequence conflict" description="In Ref. 1, 2 and 3." evidence="6" ref="1 2 3">
    <original>R</original>
    <variation>G</variation>
    <location>
        <position position="307"/>
    </location>
</feature>
<feature type="sequence conflict" description="In Ref. 1, 2 and 3." evidence="6" ref="1 2 3">
    <original>S</original>
    <variation>G</variation>
    <location>
        <position position="362"/>
    </location>
</feature>
<feature type="sequence conflict" description="In Ref. 5; AAG22232/AAG22233." evidence="6" ref="5">
    <original>FS</original>
    <variation>CA</variation>
    <location>
        <begin position="414"/>
        <end position="415"/>
    </location>
</feature>
<feature type="sequence conflict" description="In Ref. 1, 2 and 3." evidence="6" ref="1 2 3">
    <original>A</original>
    <variation>S</variation>
    <location>
        <position position="495"/>
    </location>
</feature>
<feature type="sequence conflict" description="In Ref. 5; AAG22232/AAG22233." evidence="6" ref="5">
    <original>V</original>
    <variation>I</variation>
    <location>
        <position position="553"/>
    </location>
</feature>
<feature type="sequence conflict" description="In Ref. 5; AAG22232/AAG22233." evidence="6" ref="5">
    <original>A</original>
    <variation>T</variation>
    <location>
        <position position="613"/>
    </location>
</feature>
<feature type="sequence conflict" description="In Ref. 5; AAG22232/AAG22233." evidence="6" ref="5">
    <original>C</original>
    <variation>Y</variation>
    <location>
        <position position="630"/>
    </location>
</feature>
<feature type="sequence conflict" description="In Ref. 5; AAG22232/AAG22233." evidence="6" ref="5">
    <original>V</original>
    <variation>I</variation>
    <location>
        <position position="651"/>
    </location>
</feature>
<feature type="sequence conflict" description="In Ref. 1, 2 and 3." evidence="6" ref="1 2 3">
    <original>EQ</original>
    <variation>DE</variation>
    <location>
        <begin position="827"/>
        <end position="828"/>
    </location>
</feature>
<feature type="sequence conflict" description="In Ref. 1, 2 and 3." evidence="6" ref="1 2 3">
    <original>A</original>
    <variation>G</variation>
    <location>
        <position position="877"/>
    </location>
</feature>
<feature type="sequence conflict" description="In Ref. 1, 2 and 3." evidence="6" ref="1 2 3">
    <original>GDGDGGGVDDDNLSQAKGLPIQMMITPGEVAELRRQVALENLQNQRMDNLEQDVPVEFECCFCTTKGLPGCHGECIPLRANSV</original>
    <variation>VMEMGAVSMTTTFPRPRDCPSR</variation>
    <location>
        <begin position="903"/>
        <end position="985"/>
    </location>
</feature>
<feature type="sequence conflict" description="In Ref. 4; AAC33365." evidence="6" ref="4">
    <original>DDD</original>
    <variation>NDN</variation>
    <location>
        <begin position="911"/>
        <end position="913"/>
    </location>
</feature>
<gene>
    <name type="primary">Shab</name>
    <name type="ORF">CG43128</name>
</gene>
<proteinExistence type="evidence at protein level"/>
<dbReference type="EMBL" id="M32659">
    <property type="protein sequence ID" value="AAA28896.1"/>
    <property type="molecule type" value="mRNA"/>
</dbReference>
<dbReference type="EMBL" id="AF084525">
    <property type="protein sequence ID" value="AAC33365.1"/>
    <property type="molecule type" value="mRNA"/>
</dbReference>
<dbReference type="EMBL" id="AE014296">
    <property type="protein sequence ID" value="AAG22232.2"/>
    <property type="status" value="ALT_INIT"/>
    <property type="molecule type" value="Genomic_DNA"/>
</dbReference>
<dbReference type="EMBL" id="AE014296">
    <property type="protein sequence ID" value="AAG22233.1"/>
    <property type="status" value="ALT_INIT"/>
    <property type="molecule type" value="Genomic_DNA"/>
</dbReference>
<dbReference type="PIR" id="S12746">
    <property type="entry name" value="S12746"/>
</dbReference>
<dbReference type="RefSeq" id="NP_523894.2">
    <property type="nucleotide sequence ID" value="NM_079170.6"/>
</dbReference>
<dbReference type="RefSeq" id="NP_728783.1">
    <property type="nucleotide sequence ID" value="NM_167967.4"/>
</dbReference>
<dbReference type="SMR" id="P17970"/>
<dbReference type="BioGRID" id="63854">
    <property type="interactions" value="4"/>
</dbReference>
<dbReference type="STRING" id="7227.FBpp0306030"/>
<dbReference type="TCDB" id="1.A.1.2.1">
    <property type="family name" value="the voltage-gated ion channel (vic) superfamily"/>
</dbReference>
<dbReference type="GlyCosmos" id="P17970">
    <property type="glycosylation" value="8 sites, No reported glycans"/>
</dbReference>
<dbReference type="GlyGen" id="P17970">
    <property type="glycosylation" value="8 sites"/>
</dbReference>
<dbReference type="PaxDb" id="7227-FBpp0306030"/>
<dbReference type="GeneID" id="38352"/>
<dbReference type="KEGG" id="dme:Dmel_CG43128"/>
<dbReference type="AGR" id="FB:FBgn0262593"/>
<dbReference type="CTD" id="38352"/>
<dbReference type="FlyBase" id="FBgn0262593">
    <property type="gene designation" value="Shab"/>
</dbReference>
<dbReference type="VEuPathDB" id="VectorBase:FBgn0262593"/>
<dbReference type="eggNOG" id="KOG3713">
    <property type="taxonomic scope" value="Eukaryota"/>
</dbReference>
<dbReference type="HOGENOM" id="CLU_009690_0_0_1"/>
<dbReference type="InParanoid" id="P17970"/>
<dbReference type="OrthoDB" id="296522at2759"/>
<dbReference type="PhylomeDB" id="P17970"/>
<dbReference type="Reactome" id="R-DME-1296072">
    <property type="pathway name" value="Voltage gated Potassium channels"/>
</dbReference>
<dbReference type="Reactome" id="R-DME-381676">
    <property type="pathway name" value="Glucagon-like Peptide-1 (GLP1) regulates insulin secretion"/>
</dbReference>
<dbReference type="BioGRID-ORCS" id="38352">
    <property type="hits" value="1 hit in 3 CRISPR screens"/>
</dbReference>
<dbReference type="ChiTaRS" id="Shab">
    <property type="organism name" value="fly"/>
</dbReference>
<dbReference type="GenomeRNAi" id="38352"/>
<dbReference type="PRO" id="PR:P17970"/>
<dbReference type="Proteomes" id="UP000000803">
    <property type="component" value="Chromosome 3L"/>
</dbReference>
<dbReference type="ExpressionAtlas" id="P17970">
    <property type="expression patterns" value="baseline and differential"/>
</dbReference>
<dbReference type="GO" id="GO:0016020">
    <property type="term" value="C:membrane"/>
    <property type="evidence" value="ECO:0000318"/>
    <property type="project" value="GO_Central"/>
</dbReference>
<dbReference type="GO" id="GO:0005886">
    <property type="term" value="C:plasma membrane"/>
    <property type="evidence" value="ECO:0000250"/>
    <property type="project" value="FlyBase"/>
</dbReference>
<dbReference type="GO" id="GO:0045202">
    <property type="term" value="C:synapse"/>
    <property type="evidence" value="ECO:0007669"/>
    <property type="project" value="GOC"/>
</dbReference>
<dbReference type="GO" id="GO:0008076">
    <property type="term" value="C:voltage-gated potassium channel complex"/>
    <property type="evidence" value="ECO:0000318"/>
    <property type="project" value="GO_Central"/>
</dbReference>
<dbReference type="GO" id="GO:0005251">
    <property type="term" value="F:delayed rectifier potassium channel activity"/>
    <property type="evidence" value="ECO:0000314"/>
    <property type="project" value="FlyBase"/>
</dbReference>
<dbReference type="GO" id="GO:0015459">
    <property type="term" value="F:potassium channel regulator activity"/>
    <property type="evidence" value="ECO:0000318"/>
    <property type="project" value="GO_Central"/>
</dbReference>
<dbReference type="GO" id="GO:0005249">
    <property type="term" value="F:voltage-gated potassium channel activity"/>
    <property type="evidence" value="ECO:0000304"/>
    <property type="project" value="FlyBase"/>
</dbReference>
<dbReference type="GO" id="GO:0001508">
    <property type="term" value="P:action potential"/>
    <property type="evidence" value="ECO:0000315"/>
    <property type="project" value="FlyBase"/>
</dbReference>
<dbReference type="GO" id="GO:0007268">
    <property type="term" value="P:chemical synaptic transmission"/>
    <property type="evidence" value="ECO:0000315"/>
    <property type="project" value="FlyBase"/>
</dbReference>
<dbReference type="GO" id="GO:0008345">
    <property type="term" value="P:larval locomotory behavior"/>
    <property type="evidence" value="ECO:0000315"/>
    <property type="project" value="FlyBase"/>
</dbReference>
<dbReference type="GO" id="GO:0045938">
    <property type="term" value="P:positive regulation of circadian sleep/wake cycle, sleep"/>
    <property type="evidence" value="ECO:0000315"/>
    <property type="project" value="FlyBase"/>
</dbReference>
<dbReference type="GO" id="GO:0071805">
    <property type="term" value="P:potassium ion transmembrane transport"/>
    <property type="evidence" value="ECO:0000318"/>
    <property type="project" value="GO_Central"/>
</dbReference>
<dbReference type="GO" id="GO:0006813">
    <property type="term" value="P:potassium ion transport"/>
    <property type="evidence" value="ECO:0000304"/>
    <property type="project" value="FlyBase"/>
</dbReference>
<dbReference type="GO" id="GO:0051260">
    <property type="term" value="P:protein homooligomerization"/>
    <property type="evidence" value="ECO:0007669"/>
    <property type="project" value="InterPro"/>
</dbReference>
<dbReference type="GO" id="GO:0008016">
    <property type="term" value="P:regulation of heart contraction"/>
    <property type="evidence" value="ECO:0000315"/>
    <property type="project" value="FlyBase"/>
</dbReference>
<dbReference type="GO" id="GO:0060025">
    <property type="term" value="P:regulation of synaptic activity"/>
    <property type="evidence" value="ECO:0000315"/>
    <property type="project" value="FlyBase"/>
</dbReference>
<dbReference type="CDD" id="cd18413">
    <property type="entry name" value="BTB_POZ_Shab-like"/>
    <property type="match status" value="1"/>
</dbReference>
<dbReference type="FunFam" id="1.10.287.70:FF:000034">
    <property type="entry name" value="Potassium voltage-gated channel subfamily B member"/>
    <property type="match status" value="1"/>
</dbReference>
<dbReference type="FunFam" id="1.20.120.350:FF:000018">
    <property type="entry name" value="Potassium voltage-gated channel subfamily B member"/>
    <property type="match status" value="1"/>
</dbReference>
<dbReference type="FunFam" id="3.30.710.10:FF:000010">
    <property type="entry name" value="Potassium voltage-gated channel subfamily B member"/>
    <property type="match status" value="1"/>
</dbReference>
<dbReference type="Gene3D" id="1.10.287.70">
    <property type="match status" value="1"/>
</dbReference>
<dbReference type="Gene3D" id="3.30.710.10">
    <property type="entry name" value="Potassium Channel Kv1.1, Chain A"/>
    <property type="match status" value="1"/>
</dbReference>
<dbReference type="Gene3D" id="1.20.120.350">
    <property type="entry name" value="Voltage-gated potassium channels. Chain C"/>
    <property type="match status" value="1"/>
</dbReference>
<dbReference type="InterPro" id="IPR000210">
    <property type="entry name" value="BTB/POZ_dom"/>
</dbReference>
<dbReference type="InterPro" id="IPR005821">
    <property type="entry name" value="Ion_trans_dom"/>
</dbReference>
<dbReference type="InterPro" id="IPR003968">
    <property type="entry name" value="K_chnl_volt-dep_Kv"/>
</dbReference>
<dbReference type="InterPro" id="IPR003971">
    <property type="entry name" value="K_chnl_volt-dep_Kv5/Kv9"/>
</dbReference>
<dbReference type="InterPro" id="IPR011333">
    <property type="entry name" value="SKP1/BTB/POZ_sf"/>
</dbReference>
<dbReference type="InterPro" id="IPR003131">
    <property type="entry name" value="T1-type_BTB"/>
</dbReference>
<dbReference type="InterPro" id="IPR028325">
    <property type="entry name" value="VG_K_chnl"/>
</dbReference>
<dbReference type="InterPro" id="IPR027359">
    <property type="entry name" value="Volt_channel_dom_sf"/>
</dbReference>
<dbReference type="PANTHER" id="PTHR11537:SF254">
    <property type="entry name" value="POTASSIUM VOLTAGE-GATED CHANNEL PROTEIN SHAB"/>
    <property type="match status" value="1"/>
</dbReference>
<dbReference type="PANTHER" id="PTHR11537">
    <property type="entry name" value="VOLTAGE-GATED POTASSIUM CHANNEL"/>
    <property type="match status" value="1"/>
</dbReference>
<dbReference type="Pfam" id="PF02214">
    <property type="entry name" value="BTB_2"/>
    <property type="match status" value="1"/>
</dbReference>
<dbReference type="Pfam" id="PF00520">
    <property type="entry name" value="Ion_trans"/>
    <property type="match status" value="1"/>
</dbReference>
<dbReference type="PRINTS" id="PR00169">
    <property type="entry name" value="KCHANNEL"/>
</dbReference>
<dbReference type="PRINTS" id="PR01494">
    <property type="entry name" value="KV9CHANNEL"/>
</dbReference>
<dbReference type="PRINTS" id="PR01491">
    <property type="entry name" value="KVCHANNEL"/>
</dbReference>
<dbReference type="SMART" id="SM00225">
    <property type="entry name" value="BTB"/>
    <property type="match status" value="1"/>
</dbReference>
<dbReference type="SUPFAM" id="SSF54695">
    <property type="entry name" value="POZ domain"/>
    <property type="match status" value="1"/>
</dbReference>
<dbReference type="SUPFAM" id="SSF81324">
    <property type="entry name" value="Voltage-gated potassium channels"/>
    <property type="match status" value="1"/>
</dbReference>
<keyword id="KW-0025">Alternative splicing</keyword>
<keyword id="KW-0325">Glycoprotein</keyword>
<keyword id="KW-0407">Ion channel</keyword>
<keyword id="KW-0406">Ion transport</keyword>
<keyword id="KW-0472">Membrane</keyword>
<keyword id="KW-0597">Phosphoprotein</keyword>
<keyword id="KW-0630">Potassium</keyword>
<keyword id="KW-0631">Potassium channel</keyword>
<keyword id="KW-0633">Potassium transport</keyword>
<keyword id="KW-1185">Reference proteome</keyword>
<keyword id="KW-0812">Transmembrane</keyword>
<keyword id="KW-1133">Transmembrane helix</keyword>
<keyword id="KW-0813">Transport</keyword>
<keyword id="KW-0851">Voltage-gated channel</keyword>
<name>KCNAB_DROME</name>